<comment type="function">
    <text evidence="2 3">Core component of multiple cullin-5-RING E3 ubiquitin-protein ligase complexes (ECS complexes, also named CRL5 complexes), which mediate the ubiquitination and subsequent proteasomal degradation of target proteins. Acts a scaffold protein that contributes to catalysis through positioning of the substrate and the ubiquitin-conjugating enzyme. The functional specificity of the E3 ubiquitin-protein ligase complex depends on the variable SOCS box-containing substrate recognition component (By similarity). Acts as a key regulator of neuron positioning during cortex development: component of various SOCS-containing ECS complexes, such as the ECS(SOCS7) complex, that regulate reelin signaling by mediating ubiquitination and degradation of DAB1 (By similarity). ECS(SOCS1) seems to direct ubiquitination of JAK2. The ECS(SOCS2) complex mediates the ubiquitination and subsequent proteasomal degradation of phosphorylated EPOR and GHR. The ECS(SPSB3) complex catalyzes ubiquitination of nuclear CGAS. ECS(KLHDC1) complex is part of the DesCEND (destruction via C-end degrons) pathway and mediates ubiquitination and degradation of truncated SELENOS selenoprotein produced by failed UGA/Sec decoding, which ends with a glycine. The ECS(ASB9) complex mediates ubiquitination and degradation of CKB. As part of some ECS complex, promotes 'Lys-11'-linked ubiquitination and degradation of BTRC. As part of a multisubunit ECS complex, polyubiquitinates monoubiquitinated POLR2A. As part of the ECS(RAB40C) complex, mediates ANKRD28 ubiquitination and degradation, thereby regulating protein phosphatase 6 (PP6) complex activity and focal adhesion assembly during cell migration (By similarity). As part of the ECS(RAB40A) complex, mediates RHOU 'Lys-48'-linked ubiquitination and degradation, thus inhibiting focal adhesion disassembly during cell migration (By similarity). As part of the ECS(RAB40B) complex, mediates LIMA1/EPLIN and RAP2 ubiquitination, thereby regulating actin cytoskeleton dynamics and stress fiber formation during cell migration (By similarity). May form a cell surface vasopressin receptor (By similarity).</text>
</comment>
<comment type="pathway">
    <text evidence="2">Protein modification; protein ubiquitination.</text>
</comment>
<comment type="subunit">
    <text evidence="2 3">Component of multiple cullin-5-RING E3 ubiquitin-protein ligase complexes (ECS complexes, also named CRL5 complexes) formed of CUL5, Elongin BC (ELOB and ELOC), RNF7/RBX2 and a variable SOCS box domain-containing protein as substrate-specific recognition component. CUL5-containing ECS complexes specifically contain RNF7/RBX2, and not RBX1, as catalytic subunit. Component of the ECS(ASB2) complex with the substrate recognition component ASB2. Component of the ECS(ASB6) complex with the substrate recognition component ASB6. Component of the ECS(ASB7) complex with the substrate recognition component ASB7. Component of the ECS(ASB9) complex with the substrate recognition component ASB9. Component of the ECS(ASB11) complex with the substrate recognition component ASB11. Component of the ECS(ASB12) complex with the substrate recognition component ASB12. Component of the ECS(LRRC41) complex with the substrate recognition component LRRC41. Component of the ECS(SOCS1) complex with the substrate recognition component SOCS1. Component of the ECS(SOCS2) complex with the substrate recognition component SOCS2. Component of the ECS(WSB1) complex with the substrate recognition subunit WSB1. Component of the ECS(SOCS3) complex with the substrate recognition component SOCS3 (By similarity). Component of the ECS(SOCS7) complex with the substrate recognition component SOCS7 (By similarity). Component of the ECS(SPSB1) complex with the substrate recognition component SPSB1. Component of the ECS(SPSB3) complex with the substrate recognition component SPSB3. Component of the ECS(SPSB2) complex with the substrate recognition component SPSB2. Component of the ECS(SPSB4) complex with the substrate recognition component SPSB4. Component of the ECS(RAB40) complex with the substrate recognition subunit RAB40A, RAB40B or RAB40C. Component of the ECS(KLHDC1) complex with the substrate recognition component KLHDC1. Component of the ECS(PCMTD1) complex with the substrate recognition subunit PCMTD1. May also form complexes containing RBX1 and ELOA or VHL; additional evidence is however required to confirm this result in vivo. Interacts (when neddylated) with ARIH2; leading to activate the E3 ligase activity of ARIH2. Interacts with ERCC6; the interaction is induced by DNA damaging agents or inhibitors of RNA polymerase II elongation. Interacts with ELOA (via the BC-box). Interacts (unneddylated form) with DCUN1D1, DCUN1D2, DCUN1D3, DCUN1D4 and DCUN1D5; these interactions promote the cullin neddylation (By similarity).</text>
</comment>
<comment type="subcellular location">
    <subcellularLocation>
        <location evidence="2">Nucleus</location>
    </subcellularLocation>
    <text evidence="2">Localizes to sites of DNA damage in a UBAP2 and UBAP2L-dependent manner.</text>
</comment>
<comment type="PTM">
    <text evidence="2">Neddylated; which enhances the ubiquitination activity of ECS complexes and prevents binding of the inhibitor CAND1. Deneddylated via its interaction with the COP9 signalosome (CSN).</text>
</comment>
<comment type="similarity">
    <text evidence="5">Belongs to the cullin family.</text>
</comment>
<proteinExistence type="evidence at protein level"/>
<feature type="initiator methionine" description="Removed" evidence="6">
    <location>
        <position position="1"/>
    </location>
</feature>
<feature type="chain" id="PRO_0000119801" description="Cullin-5">
    <location>
        <begin position="2"/>
        <end position="780"/>
    </location>
</feature>
<feature type="domain" description="Cullin neddylation" evidence="4">
    <location>
        <begin position="711"/>
        <end position="772"/>
    </location>
</feature>
<feature type="modified residue" description="Phosphoserine" evidence="2">
    <location>
        <position position="34"/>
    </location>
</feature>
<feature type="modified residue" description="Phosphothreonine" evidence="2">
    <location>
        <position position="210"/>
    </location>
</feature>
<feature type="cross-link" description="Glycyl lysine isopeptide (Lys-Gly) (interchain with G-Cter in NEDD8)" evidence="1">
    <location>
        <position position="724"/>
    </location>
</feature>
<dbReference type="EMBL" id="AF135115">
    <property type="protein sequence ID" value="AAF61416.1"/>
    <property type="molecule type" value="mRNA"/>
</dbReference>
<dbReference type="RefSeq" id="NP_073174.1">
    <property type="nucleotide sequence ID" value="NM_022683.1"/>
</dbReference>
<dbReference type="SMR" id="Q9JJ31"/>
<dbReference type="BioGRID" id="249162">
    <property type="interactions" value="1"/>
</dbReference>
<dbReference type="CORUM" id="Q9JJ31"/>
<dbReference type="FunCoup" id="Q9JJ31">
    <property type="interactions" value="3835"/>
</dbReference>
<dbReference type="IntAct" id="Q9JJ31">
    <property type="interactions" value="16"/>
</dbReference>
<dbReference type="STRING" id="10116.ENSRNOP00000010956"/>
<dbReference type="iPTMnet" id="Q9JJ31"/>
<dbReference type="PhosphoSitePlus" id="Q9JJ31"/>
<dbReference type="jPOST" id="Q9JJ31"/>
<dbReference type="PaxDb" id="10116-ENSRNOP00000010956"/>
<dbReference type="GeneID" id="64624"/>
<dbReference type="KEGG" id="rno:64624"/>
<dbReference type="UCSC" id="RGD:621742">
    <property type="organism name" value="rat"/>
</dbReference>
<dbReference type="AGR" id="RGD:621742"/>
<dbReference type="CTD" id="8065"/>
<dbReference type="RGD" id="621742">
    <property type="gene designation" value="Cul5"/>
</dbReference>
<dbReference type="eggNOG" id="KOG2285">
    <property type="taxonomic scope" value="Eukaryota"/>
</dbReference>
<dbReference type="HOGENOM" id="CLU_004747_5_0_1"/>
<dbReference type="InParanoid" id="Q9JJ31"/>
<dbReference type="PhylomeDB" id="Q9JJ31"/>
<dbReference type="TreeFam" id="TF105874"/>
<dbReference type="Reactome" id="R-RNO-8863795">
    <property type="pathway name" value="Downregulation of ERBB2 signaling"/>
</dbReference>
<dbReference type="Reactome" id="R-RNO-8951664">
    <property type="pathway name" value="Neddylation"/>
</dbReference>
<dbReference type="Reactome" id="R-RNO-9705462">
    <property type="pathway name" value="Inactivation of CSF3 (G-CSF) signaling"/>
</dbReference>
<dbReference type="Reactome" id="R-RNO-983168">
    <property type="pathway name" value="Antigen processing: Ubiquitination &amp; Proteasome degradation"/>
</dbReference>
<dbReference type="UniPathway" id="UPA00143"/>
<dbReference type="PRO" id="PR:Q9JJ31"/>
<dbReference type="Proteomes" id="UP000002494">
    <property type="component" value="Unplaced"/>
</dbReference>
<dbReference type="GO" id="GO:0031466">
    <property type="term" value="C:Cul5-RING ubiquitin ligase complex"/>
    <property type="evidence" value="ECO:0000250"/>
    <property type="project" value="UniProtKB"/>
</dbReference>
<dbReference type="GO" id="GO:0005634">
    <property type="term" value="C:nucleus"/>
    <property type="evidence" value="ECO:0000266"/>
    <property type="project" value="RGD"/>
</dbReference>
<dbReference type="GO" id="GO:0019005">
    <property type="term" value="C:SCF ubiquitin ligase complex"/>
    <property type="evidence" value="ECO:0000318"/>
    <property type="project" value="GO_Central"/>
</dbReference>
<dbReference type="GO" id="GO:0090734">
    <property type="term" value="C:site of DNA damage"/>
    <property type="evidence" value="ECO:0000250"/>
    <property type="project" value="UniProtKB"/>
</dbReference>
<dbReference type="GO" id="GO:0030674">
    <property type="term" value="F:protein-macromolecule adaptor activity"/>
    <property type="evidence" value="ECO:0000318"/>
    <property type="project" value="GO_Central"/>
</dbReference>
<dbReference type="GO" id="GO:0160072">
    <property type="term" value="F:ubiquitin ligase complex scaffold activity"/>
    <property type="evidence" value="ECO:0000250"/>
    <property type="project" value="UniProtKB"/>
</dbReference>
<dbReference type="GO" id="GO:0031625">
    <property type="term" value="F:ubiquitin protein ligase binding"/>
    <property type="evidence" value="ECO:0000266"/>
    <property type="project" value="RGD"/>
</dbReference>
<dbReference type="GO" id="GO:0004842">
    <property type="term" value="F:ubiquitin-protein transferase activity"/>
    <property type="evidence" value="ECO:0000304"/>
    <property type="project" value="RGD"/>
</dbReference>
<dbReference type="GO" id="GO:0005000">
    <property type="term" value="F:vasopressin receptor activity"/>
    <property type="evidence" value="ECO:0000304"/>
    <property type="project" value="RGD"/>
</dbReference>
<dbReference type="GO" id="GO:0021799">
    <property type="term" value="P:cerebral cortex radially oriented cell migration"/>
    <property type="evidence" value="ECO:0000266"/>
    <property type="project" value="RGD"/>
</dbReference>
<dbReference type="GO" id="GO:0043161">
    <property type="term" value="P:proteasome-mediated ubiquitin-dependent protein catabolic process"/>
    <property type="evidence" value="ECO:0000266"/>
    <property type="project" value="RGD"/>
</dbReference>
<dbReference type="GO" id="GO:0070979">
    <property type="term" value="P:protein K11-linked ubiquitination"/>
    <property type="evidence" value="ECO:0000266"/>
    <property type="project" value="RGD"/>
</dbReference>
<dbReference type="GO" id="GO:0000209">
    <property type="term" value="P:protein polyubiquitination"/>
    <property type="evidence" value="ECO:0000304"/>
    <property type="project" value="RGD"/>
</dbReference>
<dbReference type="GO" id="GO:0016567">
    <property type="term" value="P:protein ubiquitination"/>
    <property type="evidence" value="ECO:0000266"/>
    <property type="project" value="RGD"/>
</dbReference>
<dbReference type="GO" id="GO:0021942">
    <property type="term" value="P:radial glia guided migration of Purkinje cell"/>
    <property type="evidence" value="ECO:0000266"/>
    <property type="project" value="RGD"/>
</dbReference>
<dbReference type="GO" id="GO:0038026">
    <property type="term" value="P:reelin-mediated signaling pathway"/>
    <property type="evidence" value="ECO:0000250"/>
    <property type="project" value="UniProtKB"/>
</dbReference>
<dbReference type="GO" id="GO:0051480">
    <property type="term" value="P:regulation of cytosolic calcium ion concentration"/>
    <property type="evidence" value="ECO:0000315"/>
    <property type="project" value="RGD"/>
</dbReference>
<dbReference type="GO" id="GO:2001222">
    <property type="term" value="P:regulation of neuron migration"/>
    <property type="evidence" value="ECO:0000250"/>
    <property type="project" value="UniProtKB"/>
</dbReference>
<dbReference type="GO" id="GO:0031146">
    <property type="term" value="P:SCF-dependent proteasomal ubiquitin-dependent protein catabolic process"/>
    <property type="evidence" value="ECO:0000318"/>
    <property type="project" value="GO_Central"/>
</dbReference>
<dbReference type="FunFam" id="1.10.10.10:FF:000142">
    <property type="entry name" value="Cullin 5"/>
    <property type="match status" value="1"/>
</dbReference>
<dbReference type="FunFam" id="1.20.1310.10:FF:000009">
    <property type="entry name" value="Cullin 5"/>
    <property type="match status" value="1"/>
</dbReference>
<dbReference type="FunFam" id="1.20.1310.10:FF:000014">
    <property type="entry name" value="Cullin 5"/>
    <property type="match status" value="1"/>
</dbReference>
<dbReference type="FunFam" id="1.20.1310.10:FF:000017">
    <property type="entry name" value="Cullin 5"/>
    <property type="match status" value="1"/>
</dbReference>
<dbReference type="FunFam" id="3.30.230.130:FF:000004">
    <property type="entry name" value="Cullin 5"/>
    <property type="match status" value="1"/>
</dbReference>
<dbReference type="Gene3D" id="1.20.1310.10">
    <property type="entry name" value="Cullin Repeats"/>
    <property type="match status" value="4"/>
</dbReference>
<dbReference type="Gene3D" id="3.30.230.130">
    <property type="entry name" value="Cullin, Chain C, Domain 2"/>
    <property type="match status" value="1"/>
</dbReference>
<dbReference type="Gene3D" id="1.10.10.10">
    <property type="entry name" value="Winged helix-like DNA-binding domain superfamily/Winged helix DNA-binding domain"/>
    <property type="match status" value="1"/>
</dbReference>
<dbReference type="InterPro" id="IPR045093">
    <property type="entry name" value="Cullin"/>
</dbReference>
<dbReference type="InterPro" id="IPR016157">
    <property type="entry name" value="Cullin_CS"/>
</dbReference>
<dbReference type="InterPro" id="IPR016158">
    <property type="entry name" value="Cullin_homology"/>
</dbReference>
<dbReference type="InterPro" id="IPR036317">
    <property type="entry name" value="Cullin_homology_sf"/>
</dbReference>
<dbReference type="InterPro" id="IPR001373">
    <property type="entry name" value="Cullin_N"/>
</dbReference>
<dbReference type="InterPro" id="IPR019559">
    <property type="entry name" value="Cullin_neddylation_domain"/>
</dbReference>
<dbReference type="InterPro" id="IPR016159">
    <property type="entry name" value="Cullin_repeat-like_dom_sf"/>
</dbReference>
<dbReference type="InterPro" id="IPR036388">
    <property type="entry name" value="WH-like_DNA-bd_sf"/>
</dbReference>
<dbReference type="InterPro" id="IPR036390">
    <property type="entry name" value="WH_DNA-bd_sf"/>
</dbReference>
<dbReference type="PANTHER" id="PTHR11932">
    <property type="entry name" value="CULLIN"/>
    <property type="match status" value="1"/>
</dbReference>
<dbReference type="Pfam" id="PF00888">
    <property type="entry name" value="Cullin"/>
    <property type="match status" value="1"/>
</dbReference>
<dbReference type="Pfam" id="PF10557">
    <property type="entry name" value="Cullin_Nedd8"/>
    <property type="match status" value="1"/>
</dbReference>
<dbReference type="SMART" id="SM00182">
    <property type="entry name" value="CULLIN"/>
    <property type="match status" value="1"/>
</dbReference>
<dbReference type="SMART" id="SM00884">
    <property type="entry name" value="Cullin_Nedd8"/>
    <property type="match status" value="1"/>
</dbReference>
<dbReference type="SUPFAM" id="SSF75632">
    <property type="entry name" value="Cullin homology domain"/>
    <property type="match status" value="1"/>
</dbReference>
<dbReference type="SUPFAM" id="SSF74788">
    <property type="entry name" value="Cullin repeat-like"/>
    <property type="match status" value="1"/>
</dbReference>
<dbReference type="SUPFAM" id="SSF46785">
    <property type="entry name" value="Winged helix' DNA-binding domain"/>
    <property type="match status" value="1"/>
</dbReference>
<dbReference type="PROSITE" id="PS01256">
    <property type="entry name" value="CULLIN_1"/>
    <property type="match status" value="1"/>
</dbReference>
<dbReference type="PROSITE" id="PS50069">
    <property type="entry name" value="CULLIN_2"/>
    <property type="match status" value="1"/>
</dbReference>
<gene>
    <name evidence="9" type="primary">Cul5</name>
    <name evidence="7" type="synonym">Vacm1</name>
</gene>
<sequence length="780" mass="90890">MATSNLLKNKGSLQFEDKWDFMRPIVLKLLRQESVTKQQWFDLFSDVHAVCLWDDKGSSKIHQALKEDILEFIKQAQARVLSHQDDTALLKAYIVEWRKFFTQCDILPKPFCQLEVTLLGKQSSNKKSNMEDSIVRKLMLDTWNESIFSNIKNRLQDSAMKLVHAERLGEAFDSQLVIGVRESYVNLCSNPEDKLQIYRDNFEKAYLDSTERFYRTQAPSYLQQNGVQNYMKYADAKLKEEEKRALRYLETRRECNSVEALMECCVNALVTSFKETILAECQGMIKRNETEKLHLMFSLMDKVPGGIEPMLKDLEEHIISAGLADMVAAAETITTDSEKYVEQLLTLFNRFSKLVKEAFQDDPRFLTARDKAYKAVVNDATIFKLELPLKQKGVGLKTQPESKCPELLANYCDMLLRKTPLSKKLTSEEIEAKLKEVLLVLKYVQNKDVFMRYHKAHLTRRLILDISADSEIEENMVEWLREVGMPADYVNKLARMFQDIKVSEDLNQAFKEMHKNNKLALPADSVNIKILNAGAWSRSSEKVFVSLPTELEDLIPEVEEFYKKNHSGRKLHWHHLMSNGIITFKNEVGQYDLEVTTFQLAVLFAWNQRPREKISFENLKLATELPDAELRRTLWSLVAFPKLKRQVLLYDPQVNSPKDFTEGTLFSVNQDFSLIKNAKVQKRGKINLIGRLQLTTERMREEENEGIVQLRILRTQEAIIQIMKMRKKISNAQLQTELVEILKNMFLPQKKMIKEQIEWLIEHKYIRRDEADINTFIYMA</sequence>
<evidence type="ECO:0000250" key="1">
    <source>
        <dbReference type="UniProtKB" id="Q13616"/>
    </source>
</evidence>
<evidence type="ECO:0000250" key="2">
    <source>
        <dbReference type="UniProtKB" id="Q93034"/>
    </source>
</evidence>
<evidence type="ECO:0000250" key="3">
    <source>
        <dbReference type="UniProtKB" id="Q9D5V5"/>
    </source>
</evidence>
<evidence type="ECO:0000255" key="4"/>
<evidence type="ECO:0000255" key="5">
    <source>
        <dbReference type="PROSITE-ProRule" id="PRU00330"/>
    </source>
</evidence>
<evidence type="ECO:0000269" key="6">
    <source ref="2"/>
</evidence>
<evidence type="ECO:0000303" key="7">
    <source>
    </source>
</evidence>
<evidence type="ECO:0000305" key="8"/>
<evidence type="ECO:0000312" key="9">
    <source>
        <dbReference type="RGD" id="621742"/>
    </source>
</evidence>
<protein>
    <recommendedName>
        <fullName evidence="8">Cullin-5</fullName>
        <shortName evidence="8">CUL-5</shortName>
    </recommendedName>
    <alternativeName>
        <fullName evidence="7">Vasopressin-activated calcium-mobilizing receptor 1</fullName>
        <shortName evidence="7">VACM-1</shortName>
    </alternativeName>
</protein>
<accession>Q9JJ31</accession>
<name>CUL5_RAT</name>
<reference key="1">
    <citation type="journal article" date="2000" name="J. Neuroendocrinol.">
        <title>Expression of the genes encoding the vasopressin-activated calcium-mobilizing receptor and the dual angiotensin II/Vasopressin receptor in the rat central nervous system.</title>
        <authorList>
            <person name="Hurbin A."/>
            <person name="Orcel H."/>
            <person name="Ferraz C."/>
            <person name="Moos F.C."/>
            <person name="Rabie A."/>
        </authorList>
    </citation>
    <scope>NUCLEOTIDE SEQUENCE [MRNA]</scope>
    <source>
        <strain>Wistar</strain>
        <tissue>Liver</tissue>
    </source>
</reference>
<reference key="2">
    <citation type="submission" date="2006-08" db="UniProtKB">
        <authorList>
            <person name="Bienvenut W.V."/>
            <person name="von Kriegsheim A.F."/>
            <person name="Kolch W."/>
        </authorList>
    </citation>
    <scope>PROTEIN SEQUENCE OF 2-10; 80-91; 357-364; 375-384; 482-492; 502-511; 519-529; 614-620; 633-642 AND 646-658</scope>
    <scope>CLEAVAGE OF INITIATOR METHIONINE</scope>
    <scope>IDENTIFICATION BY MASS SPECTROMETRY</scope>
    <source>
        <tissue>Pheochromocytoma</tissue>
    </source>
</reference>
<keyword id="KW-0903">Direct protein sequencing</keyword>
<keyword id="KW-1017">Isopeptide bond</keyword>
<keyword id="KW-0539">Nucleus</keyword>
<keyword id="KW-0597">Phosphoprotein</keyword>
<keyword id="KW-0675">Receptor</keyword>
<keyword id="KW-1185">Reference proteome</keyword>
<keyword id="KW-0832">Ubl conjugation</keyword>
<keyword id="KW-0833">Ubl conjugation pathway</keyword>
<organism>
    <name type="scientific">Rattus norvegicus</name>
    <name type="common">Rat</name>
    <dbReference type="NCBI Taxonomy" id="10116"/>
    <lineage>
        <taxon>Eukaryota</taxon>
        <taxon>Metazoa</taxon>
        <taxon>Chordata</taxon>
        <taxon>Craniata</taxon>
        <taxon>Vertebrata</taxon>
        <taxon>Euteleostomi</taxon>
        <taxon>Mammalia</taxon>
        <taxon>Eutheria</taxon>
        <taxon>Euarchontoglires</taxon>
        <taxon>Glires</taxon>
        <taxon>Rodentia</taxon>
        <taxon>Myomorpha</taxon>
        <taxon>Muroidea</taxon>
        <taxon>Muridae</taxon>
        <taxon>Murinae</taxon>
        <taxon>Rattus</taxon>
    </lineage>
</organism>